<sequence length="258" mass="27007">MMNPLIIKLGGVLLDSEEALERLFTALVNYRESHQRPLVIVHGGGCVVDELMKGLNLPVKKKDGLRVTPADQIGIITGALAGTANKTLLAWAKKHHIASVGLFLGDGDSVNVTQLDEALGHVGLAQPGSPKLINMLLENGFLPVVSSIGVTDDGQLMNVNADQAATALAATLGADLILLSDVSGILDGKGQRIAEMTASKAEQLIDQGIITDGMIVKVNAALDAARALGRPVDIASWRHAEQLPALFNGTPIGTRILA</sequence>
<organism>
    <name type="scientific">Salmonella choleraesuis (strain SC-B67)</name>
    <dbReference type="NCBI Taxonomy" id="321314"/>
    <lineage>
        <taxon>Bacteria</taxon>
        <taxon>Pseudomonadati</taxon>
        <taxon>Pseudomonadota</taxon>
        <taxon>Gammaproteobacteria</taxon>
        <taxon>Enterobacterales</taxon>
        <taxon>Enterobacteriaceae</taxon>
        <taxon>Salmonella</taxon>
    </lineage>
</organism>
<comment type="function">
    <text evidence="1">Catalyzes the ATP-dependent phosphorylation of N-acetyl-L-glutamate.</text>
</comment>
<comment type="catalytic activity">
    <reaction evidence="1">
        <text>N-acetyl-L-glutamate + ATP = N-acetyl-L-glutamyl 5-phosphate + ADP</text>
        <dbReference type="Rhea" id="RHEA:14629"/>
        <dbReference type="ChEBI" id="CHEBI:30616"/>
        <dbReference type="ChEBI" id="CHEBI:44337"/>
        <dbReference type="ChEBI" id="CHEBI:57936"/>
        <dbReference type="ChEBI" id="CHEBI:456216"/>
        <dbReference type="EC" id="2.7.2.8"/>
    </reaction>
</comment>
<comment type="pathway">
    <text evidence="1">Amino-acid biosynthesis; L-arginine biosynthesis; N(2)-acetyl-L-ornithine from L-glutamate: step 2/4.</text>
</comment>
<comment type="subunit">
    <text evidence="1">Homodimer.</text>
</comment>
<comment type="subcellular location">
    <subcellularLocation>
        <location evidence="1">Cytoplasm</location>
    </subcellularLocation>
</comment>
<comment type="similarity">
    <text evidence="1">Belongs to the acetylglutamate kinase family. ArgB subfamily.</text>
</comment>
<comment type="sequence caution" evidence="2">
    <conflict type="erroneous initiation">
        <sequence resource="EMBL-CDS" id="AAX67918"/>
    </conflict>
</comment>
<gene>
    <name evidence="1" type="primary">argB</name>
    <name type="ordered locus">SCH_4012</name>
</gene>
<feature type="chain" id="PRO_0000264754" description="Acetylglutamate kinase">
    <location>
        <begin position="1"/>
        <end position="258"/>
    </location>
</feature>
<feature type="binding site" evidence="1">
    <location>
        <begin position="44"/>
        <end position="45"/>
    </location>
    <ligand>
        <name>substrate</name>
    </ligand>
</feature>
<feature type="binding site" evidence="1">
    <location>
        <position position="66"/>
    </location>
    <ligand>
        <name>substrate</name>
    </ligand>
</feature>
<feature type="binding site" evidence="1">
    <location>
        <position position="158"/>
    </location>
    <ligand>
        <name>substrate</name>
    </ligand>
</feature>
<feature type="binding site" evidence="1">
    <location>
        <begin position="181"/>
        <end position="186"/>
    </location>
    <ligand>
        <name>ATP</name>
        <dbReference type="ChEBI" id="CHEBI:30616"/>
    </ligand>
</feature>
<feature type="binding site" evidence="1">
    <location>
        <begin position="209"/>
        <end position="211"/>
    </location>
    <ligand>
        <name>ATP</name>
        <dbReference type="ChEBI" id="CHEBI:30616"/>
    </ligand>
</feature>
<feature type="site" description="Transition state stabilizer" evidence="1">
    <location>
        <position position="8"/>
    </location>
</feature>
<feature type="site" description="Transition state stabilizer" evidence="1">
    <location>
        <position position="217"/>
    </location>
</feature>
<accession>Q57H94</accession>
<protein>
    <recommendedName>
        <fullName evidence="1">Acetylglutamate kinase</fullName>
        <ecNumber evidence="1">2.7.2.8</ecNumber>
    </recommendedName>
    <alternativeName>
        <fullName evidence="1">N-acetyl-L-glutamate 5-phosphotransferase</fullName>
    </alternativeName>
    <alternativeName>
        <fullName evidence="1">NAG kinase</fullName>
        <shortName evidence="1">NAGK</shortName>
    </alternativeName>
</protein>
<evidence type="ECO:0000255" key="1">
    <source>
        <dbReference type="HAMAP-Rule" id="MF_00082"/>
    </source>
</evidence>
<evidence type="ECO:0000305" key="2"/>
<keyword id="KW-0028">Amino-acid biosynthesis</keyword>
<keyword id="KW-0055">Arginine biosynthesis</keyword>
<keyword id="KW-0067">ATP-binding</keyword>
<keyword id="KW-0963">Cytoplasm</keyword>
<keyword id="KW-0418">Kinase</keyword>
<keyword id="KW-0547">Nucleotide-binding</keyword>
<keyword id="KW-0808">Transferase</keyword>
<reference key="1">
    <citation type="journal article" date="2005" name="Nucleic Acids Res.">
        <title>The genome sequence of Salmonella enterica serovar Choleraesuis, a highly invasive and resistant zoonotic pathogen.</title>
        <authorList>
            <person name="Chiu C.-H."/>
            <person name="Tang P."/>
            <person name="Chu C."/>
            <person name="Hu S."/>
            <person name="Bao Q."/>
            <person name="Yu J."/>
            <person name="Chou Y.-Y."/>
            <person name="Wang H.-S."/>
            <person name="Lee Y.-S."/>
        </authorList>
    </citation>
    <scope>NUCLEOTIDE SEQUENCE [LARGE SCALE GENOMIC DNA]</scope>
    <source>
        <strain>SC-B67</strain>
    </source>
</reference>
<proteinExistence type="inferred from homology"/>
<dbReference type="EC" id="2.7.2.8" evidence="1"/>
<dbReference type="EMBL" id="AE017220">
    <property type="protein sequence ID" value="AAX67918.1"/>
    <property type="status" value="ALT_INIT"/>
    <property type="molecule type" value="Genomic_DNA"/>
</dbReference>
<dbReference type="RefSeq" id="WP_001575262.1">
    <property type="nucleotide sequence ID" value="NC_006905.1"/>
</dbReference>
<dbReference type="SMR" id="Q57H94"/>
<dbReference type="KEGG" id="sec:SCH_4012"/>
<dbReference type="HOGENOM" id="CLU_053680_1_1_6"/>
<dbReference type="UniPathway" id="UPA00068">
    <property type="reaction ID" value="UER00107"/>
</dbReference>
<dbReference type="Proteomes" id="UP000000538">
    <property type="component" value="Chromosome"/>
</dbReference>
<dbReference type="GO" id="GO:0005737">
    <property type="term" value="C:cytoplasm"/>
    <property type="evidence" value="ECO:0007669"/>
    <property type="project" value="UniProtKB-SubCell"/>
</dbReference>
<dbReference type="GO" id="GO:0003991">
    <property type="term" value="F:acetylglutamate kinase activity"/>
    <property type="evidence" value="ECO:0007669"/>
    <property type="project" value="UniProtKB-UniRule"/>
</dbReference>
<dbReference type="GO" id="GO:0005524">
    <property type="term" value="F:ATP binding"/>
    <property type="evidence" value="ECO:0007669"/>
    <property type="project" value="UniProtKB-UniRule"/>
</dbReference>
<dbReference type="GO" id="GO:0042450">
    <property type="term" value="P:arginine biosynthetic process via ornithine"/>
    <property type="evidence" value="ECO:0007669"/>
    <property type="project" value="UniProtKB-UniRule"/>
</dbReference>
<dbReference type="GO" id="GO:0006526">
    <property type="term" value="P:L-arginine biosynthetic process"/>
    <property type="evidence" value="ECO:0007669"/>
    <property type="project" value="UniProtKB-UniPathway"/>
</dbReference>
<dbReference type="CDD" id="cd04249">
    <property type="entry name" value="AAK_NAGK-NC"/>
    <property type="match status" value="1"/>
</dbReference>
<dbReference type="FunFam" id="3.40.1160.10:FF:000008">
    <property type="entry name" value="Acetylglutamate kinase"/>
    <property type="match status" value="1"/>
</dbReference>
<dbReference type="Gene3D" id="3.40.1160.10">
    <property type="entry name" value="Acetylglutamate kinase-like"/>
    <property type="match status" value="1"/>
</dbReference>
<dbReference type="HAMAP" id="MF_00082">
    <property type="entry name" value="ArgB"/>
    <property type="match status" value="1"/>
</dbReference>
<dbReference type="InterPro" id="IPR036393">
    <property type="entry name" value="AceGlu_kinase-like_sf"/>
</dbReference>
<dbReference type="InterPro" id="IPR004662">
    <property type="entry name" value="AcgluKinase_fam"/>
</dbReference>
<dbReference type="InterPro" id="IPR037528">
    <property type="entry name" value="ArgB"/>
</dbReference>
<dbReference type="InterPro" id="IPR001048">
    <property type="entry name" value="Asp/Glu/Uridylate_kinase"/>
</dbReference>
<dbReference type="InterPro" id="IPR041731">
    <property type="entry name" value="NAGK-NC"/>
</dbReference>
<dbReference type="NCBIfam" id="TIGR00761">
    <property type="entry name" value="argB"/>
    <property type="match status" value="1"/>
</dbReference>
<dbReference type="PANTHER" id="PTHR23342">
    <property type="entry name" value="N-ACETYLGLUTAMATE SYNTHASE"/>
    <property type="match status" value="1"/>
</dbReference>
<dbReference type="PANTHER" id="PTHR23342:SF0">
    <property type="entry name" value="N-ACETYLGLUTAMATE SYNTHASE, MITOCHONDRIAL"/>
    <property type="match status" value="1"/>
</dbReference>
<dbReference type="Pfam" id="PF00696">
    <property type="entry name" value="AA_kinase"/>
    <property type="match status" value="1"/>
</dbReference>
<dbReference type="PIRSF" id="PIRSF000728">
    <property type="entry name" value="NAGK"/>
    <property type="match status" value="1"/>
</dbReference>
<dbReference type="SUPFAM" id="SSF53633">
    <property type="entry name" value="Carbamate kinase-like"/>
    <property type="match status" value="1"/>
</dbReference>
<name>ARGB_SALCH</name>